<proteinExistence type="inferred from homology"/>
<keyword id="KW-0210">Decarboxylase</keyword>
<keyword id="KW-0456">Lyase</keyword>
<keyword id="KW-0460">Magnesium</keyword>
<keyword id="KW-0479">Metal-binding</keyword>
<keyword id="KW-0786">Thiamine pyrophosphate</keyword>
<sequence length="560" mass="59783">MTPQKSDACSDPVYTVGDYLLDRLAELGVSEIFGVPGDYNLQFLDHIVAHPTIRWVGSANELNAGYAADGYGRLRGMSAVVTTFGVGELSVTNAIAGSYAEHVPVVHIVGGPTKDAQGTRRALHHSLGDGDFEHFLRISREITCAQANLMPATAGREIDRVLSEVREQKRPGYILLSSDVARFPTEPPAAPLPRYPGGTSPRALSLFTKAAIELIADHQLTVLADLLVHRLQAVKELEALLAADVVPHATLMWGKSLLDESSPNFLGIYAGAASAERVRAAIEGAPVLVTAGVVFTDMVSGFFSQRIDPARTIDIGQYQSSVADQVFAPLEMSAALQALATILTGRGISSPPVVPPPAEPPPAMPARDEPLTQQMVWDRVCSALTPGNVVLADQGTSFYGMADHRLPQGVTFIGQPLWGSIGYTLPAAVGAAVAHPDRRTVLLIGDGAAQLTVQELGTFSREGLSPVIVVVNNDGYTVERAIHGETAPYNDIVSWNWTELPSALGVTNHLAFRAQTYGQLDDALTVAAARRDRMVLVEVVLPRLEIPRLLGQLVGSMAPQ</sequence>
<dbReference type="EC" id="4.1.1.-"/>
<dbReference type="EMBL" id="AM408590">
    <property type="protein sequence ID" value="CAL70891.1"/>
    <property type="molecule type" value="Genomic_DNA"/>
</dbReference>
<dbReference type="SMR" id="A1KGY5"/>
<dbReference type="KEGG" id="mbb:BCG_0905c"/>
<dbReference type="HOGENOM" id="CLU_013748_0_2_11"/>
<dbReference type="Proteomes" id="UP000001472">
    <property type="component" value="Chromosome"/>
</dbReference>
<dbReference type="GO" id="GO:0005829">
    <property type="term" value="C:cytosol"/>
    <property type="evidence" value="ECO:0007669"/>
    <property type="project" value="TreeGrafter"/>
</dbReference>
<dbReference type="GO" id="GO:0000287">
    <property type="term" value="F:magnesium ion binding"/>
    <property type="evidence" value="ECO:0007669"/>
    <property type="project" value="InterPro"/>
</dbReference>
<dbReference type="GO" id="GO:0004737">
    <property type="term" value="F:pyruvate decarboxylase activity"/>
    <property type="evidence" value="ECO:0007669"/>
    <property type="project" value="TreeGrafter"/>
</dbReference>
<dbReference type="GO" id="GO:0030976">
    <property type="term" value="F:thiamine pyrophosphate binding"/>
    <property type="evidence" value="ECO:0007669"/>
    <property type="project" value="InterPro"/>
</dbReference>
<dbReference type="GO" id="GO:0000949">
    <property type="term" value="P:aromatic amino acid family catabolic process to alcohol via Ehrlich pathway"/>
    <property type="evidence" value="ECO:0007669"/>
    <property type="project" value="TreeGrafter"/>
</dbReference>
<dbReference type="CDD" id="cd02005">
    <property type="entry name" value="TPP_PDC_IPDC"/>
    <property type="match status" value="1"/>
</dbReference>
<dbReference type="CDD" id="cd07038">
    <property type="entry name" value="TPP_PYR_PDC_IPDC_like"/>
    <property type="match status" value="1"/>
</dbReference>
<dbReference type="FunFam" id="3.40.50.1220:FF:000042">
    <property type="entry name" value="Alpha-keto-acid decarboxylase"/>
    <property type="match status" value="1"/>
</dbReference>
<dbReference type="FunFam" id="3.40.50.970:FF:000019">
    <property type="entry name" value="Pyruvate decarboxylase isozyme"/>
    <property type="match status" value="1"/>
</dbReference>
<dbReference type="FunFam" id="3.40.50.970:FF:000024">
    <property type="entry name" value="Pyruvate decarboxylase isozyme"/>
    <property type="match status" value="1"/>
</dbReference>
<dbReference type="Gene3D" id="3.40.50.970">
    <property type="match status" value="2"/>
</dbReference>
<dbReference type="Gene3D" id="3.40.50.1220">
    <property type="entry name" value="TPP-binding domain"/>
    <property type="match status" value="1"/>
</dbReference>
<dbReference type="InterPro" id="IPR029035">
    <property type="entry name" value="DHS-like_NAD/FAD-binding_dom"/>
</dbReference>
<dbReference type="InterPro" id="IPR012110">
    <property type="entry name" value="PDC/IPDC-like"/>
</dbReference>
<dbReference type="InterPro" id="IPR029061">
    <property type="entry name" value="THDP-binding"/>
</dbReference>
<dbReference type="InterPro" id="IPR012000">
    <property type="entry name" value="Thiamin_PyroP_enz_cen_dom"/>
</dbReference>
<dbReference type="InterPro" id="IPR012001">
    <property type="entry name" value="Thiamin_PyroP_enz_TPP-bd_dom"/>
</dbReference>
<dbReference type="InterPro" id="IPR000399">
    <property type="entry name" value="TPP-bd_CS"/>
</dbReference>
<dbReference type="InterPro" id="IPR011766">
    <property type="entry name" value="TPP_enzyme_TPP-bd"/>
</dbReference>
<dbReference type="InterPro" id="IPR047214">
    <property type="entry name" value="TPP_PDC_IPDC"/>
</dbReference>
<dbReference type="InterPro" id="IPR047213">
    <property type="entry name" value="TPP_PYR_PDC_IPDC-like"/>
</dbReference>
<dbReference type="PANTHER" id="PTHR43452">
    <property type="entry name" value="PYRUVATE DECARBOXYLASE"/>
    <property type="match status" value="1"/>
</dbReference>
<dbReference type="PANTHER" id="PTHR43452:SF30">
    <property type="entry name" value="PYRUVATE DECARBOXYLASE ISOZYME 1-RELATED"/>
    <property type="match status" value="1"/>
</dbReference>
<dbReference type="Pfam" id="PF02775">
    <property type="entry name" value="TPP_enzyme_C"/>
    <property type="match status" value="1"/>
</dbReference>
<dbReference type="Pfam" id="PF00205">
    <property type="entry name" value="TPP_enzyme_M"/>
    <property type="match status" value="1"/>
</dbReference>
<dbReference type="Pfam" id="PF02776">
    <property type="entry name" value="TPP_enzyme_N"/>
    <property type="match status" value="1"/>
</dbReference>
<dbReference type="PIRSF" id="PIRSF036565">
    <property type="entry name" value="Pyruvt_ip_decrb"/>
    <property type="match status" value="1"/>
</dbReference>
<dbReference type="SUPFAM" id="SSF52467">
    <property type="entry name" value="DHS-like NAD/FAD-binding domain"/>
    <property type="match status" value="1"/>
</dbReference>
<dbReference type="SUPFAM" id="SSF52518">
    <property type="entry name" value="Thiamin diphosphate-binding fold (THDP-binding)"/>
    <property type="match status" value="2"/>
</dbReference>
<dbReference type="PROSITE" id="PS00187">
    <property type="entry name" value="TPP_ENZYMES"/>
    <property type="match status" value="1"/>
</dbReference>
<comment type="function">
    <text>Decarboxylates branched-chain and aromatic alpha-keto acids to aldehydes.</text>
</comment>
<comment type="cofactor">
    <cofactor evidence="1">
        <name>a metal cation</name>
        <dbReference type="ChEBI" id="CHEBI:25213"/>
    </cofactor>
    <text evidence="1">Binds 1 metal ion per subunit.</text>
</comment>
<comment type="cofactor">
    <cofactor evidence="1">
        <name>thiamine diphosphate</name>
        <dbReference type="ChEBI" id="CHEBI:58937"/>
    </cofactor>
    <text evidence="1">Binds 1 thiamine pyrophosphate per subunit.</text>
</comment>
<comment type="similarity">
    <text evidence="2">Belongs to the TPP enzyme family.</text>
</comment>
<feature type="chain" id="PRO_0000333747" description="Alpha-keto-acid decarboxylase">
    <location>
        <begin position="1"/>
        <end position="560"/>
    </location>
</feature>
<feature type="region of interest" description="Thiamine pyrophosphate binding" evidence="1">
    <location>
        <begin position="396"/>
        <end position="478"/>
    </location>
</feature>
<feature type="binding site" evidence="1">
    <location>
        <position position="61"/>
    </location>
    <ligand>
        <name>thiamine diphosphate</name>
        <dbReference type="ChEBI" id="CHEBI:58937"/>
    </ligand>
</feature>
<feature type="binding site" evidence="1">
    <location>
        <position position="446"/>
    </location>
    <ligand>
        <name>Mg(2+)</name>
        <dbReference type="ChEBI" id="CHEBI:18420"/>
    </ligand>
</feature>
<feature type="binding site" evidence="1">
    <location>
        <position position="473"/>
    </location>
    <ligand>
        <name>Mg(2+)</name>
        <dbReference type="ChEBI" id="CHEBI:18420"/>
    </ligand>
</feature>
<feature type="binding site" evidence="1">
    <location>
        <position position="475"/>
    </location>
    <ligand>
        <name>Mg(2+)</name>
        <dbReference type="ChEBI" id="CHEBI:18420"/>
    </ligand>
</feature>
<accession>A1KGY5</accession>
<name>KDC_MYCBP</name>
<gene>
    <name type="primary">kdc</name>
    <name type="ordered locus">BCG_0905c</name>
</gene>
<evidence type="ECO:0000250" key="1"/>
<evidence type="ECO:0000305" key="2"/>
<protein>
    <recommendedName>
        <fullName>Alpha-keto-acid decarboxylase</fullName>
        <shortName>KDC</shortName>
        <ecNumber>4.1.1.-</ecNumber>
    </recommendedName>
</protein>
<reference key="1">
    <citation type="journal article" date="2007" name="Proc. Natl. Acad. Sci. U.S.A.">
        <title>Genome plasticity of BCG and impact on vaccine efficacy.</title>
        <authorList>
            <person name="Brosch R."/>
            <person name="Gordon S.V."/>
            <person name="Garnier T."/>
            <person name="Eiglmeier K."/>
            <person name="Frigui W."/>
            <person name="Valenti P."/>
            <person name="Dos Santos S."/>
            <person name="Duthoy S."/>
            <person name="Lacroix C."/>
            <person name="Garcia-Pelayo C."/>
            <person name="Inwald J.K."/>
            <person name="Golby P."/>
            <person name="Garcia J.N."/>
            <person name="Hewinson R.G."/>
            <person name="Behr M.A."/>
            <person name="Quail M.A."/>
            <person name="Churcher C."/>
            <person name="Barrell B.G."/>
            <person name="Parkhill J."/>
            <person name="Cole S.T."/>
        </authorList>
    </citation>
    <scope>NUCLEOTIDE SEQUENCE [LARGE SCALE GENOMIC DNA]</scope>
    <source>
        <strain>BCG / Pasteur 1173P2</strain>
    </source>
</reference>
<organism>
    <name type="scientific">Mycobacterium bovis (strain BCG / Pasteur 1173P2)</name>
    <dbReference type="NCBI Taxonomy" id="410289"/>
    <lineage>
        <taxon>Bacteria</taxon>
        <taxon>Bacillati</taxon>
        <taxon>Actinomycetota</taxon>
        <taxon>Actinomycetes</taxon>
        <taxon>Mycobacteriales</taxon>
        <taxon>Mycobacteriaceae</taxon>
        <taxon>Mycobacterium</taxon>
        <taxon>Mycobacterium tuberculosis complex</taxon>
    </lineage>
</organism>